<name>KTNA1_SALSA</name>
<gene>
    <name type="primary">katna1</name>
</gene>
<keyword id="KW-0067">ATP-binding</keyword>
<keyword id="KW-0131">Cell cycle</keyword>
<keyword id="KW-0132">Cell division</keyword>
<keyword id="KW-0963">Cytoplasm</keyword>
<keyword id="KW-0206">Cytoskeleton</keyword>
<keyword id="KW-0413">Isomerase</keyword>
<keyword id="KW-0493">Microtubule</keyword>
<keyword id="KW-0498">Mitosis</keyword>
<keyword id="KW-0547">Nucleotide-binding</keyword>
<keyword id="KW-1185">Reference proteome</keyword>
<accession>B5X3X5</accession>
<comment type="function">
    <text evidence="2">Catalytic subunit of a complex which severs microtubules in an ATP-dependent manner. Microtubule severing may promote rapid reorganization of cellular microtubule arrays and the release of microtubules from the centrosome following nucleation.</text>
</comment>
<comment type="catalytic activity">
    <reaction evidence="2">
        <text>n ATP + n H2O + a microtubule = n ADP + n phosphate + (n+1) alpha/beta tubulin heterodimers.</text>
        <dbReference type="EC" id="5.6.1.1"/>
    </reaction>
</comment>
<comment type="activity regulation">
    <text evidence="2">ATPase activity is stimulated by microtubules, which promote homooligomerization. ATP-dependent microtubule severing is stimulated by interaction with katnb1.</text>
</comment>
<comment type="subunit">
    <text evidence="2">Can homooligomerize into hexameric rings, which may be promoted by interaction with microtubules. Interacts with katnb1, which may serve as a targeting subunit.</text>
</comment>
<comment type="subcellular location">
    <subcellularLocation>
        <location evidence="2">Cytoplasm</location>
    </subcellularLocation>
    <subcellularLocation>
        <location evidence="2">Cytoplasm</location>
        <location evidence="2">Cytoskeleton</location>
        <location evidence="2">Microtubule organizing center</location>
        <location evidence="2">Centrosome</location>
    </subcellularLocation>
    <subcellularLocation>
        <location evidence="2">Cytoplasm</location>
        <location evidence="2">Cytoskeleton</location>
        <location evidence="2">Spindle pole</location>
    </subcellularLocation>
    <subcellularLocation>
        <location evidence="1">Cytoplasm</location>
        <location evidence="1">Cytoskeleton</location>
        <location evidence="1">Spindle</location>
    </subcellularLocation>
    <text evidence="2">Predominantly cytoplasmic. Also localized to the interphase centrosome and the mitotic spindle poles. Enhanced recruitment to the mitotic spindle poles requires microtubules and interaction with katnb1.</text>
</comment>
<comment type="similarity">
    <text evidence="2">Belongs to the AAA ATPase family. Katanin p60 subunit A1 subfamily.</text>
</comment>
<organism>
    <name type="scientific">Salmo salar</name>
    <name type="common">Atlantic salmon</name>
    <dbReference type="NCBI Taxonomy" id="8030"/>
    <lineage>
        <taxon>Eukaryota</taxon>
        <taxon>Metazoa</taxon>
        <taxon>Chordata</taxon>
        <taxon>Craniata</taxon>
        <taxon>Vertebrata</taxon>
        <taxon>Euteleostomi</taxon>
        <taxon>Actinopterygii</taxon>
        <taxon>Neopterygii</taxon>
        <taxon>Teleostei</taxon>
        <taxon>Protacanthopterygii</taxon>
        <taxon>Salmoniformes</taxon>
        <taxon>Salmonidae</taxon>
        <taxon>Salmoninae</taxon>
        <taxon>Salmo</taxon>
    </lineage>
</organism>
<reference key="1">
    <citation type="journal article" date="2010" name="BMC Genomics">
        <title>Salmo salar and Esox lucius full-length cDNA sequences reveal changes in evolutionary pressures on a post-tetraploidization genome.</title>
        <authorList>
            <person name="Leong J.S."/>
            <person name="Jantzen S.G."/>
            <person name="von Schalburg K.R."/>
            <person name="Cooper G.A."/>
            <person name="Messmer A.M."/>
            <person name="Liao N.Y."/>
            <person name="Munro S."/>
            <person name="Moore R."/>
            <person name="Holt R.A."/>
            <person name="Jones S.J."/>
            <person name="Davidson W.S."/>
            <person name="Koop B.F."/>
        </authorList>
    </citation>
    <scope>NUCLEOTIDE SEQUENCE [LARGE SCALE MRNA]</scope>
    <source>
        <tissue>Brain</tissue>
    </source>
</reference>
<proteinExistence type="evidence at transcript level"/>
<sequence>MSLHEINENVKLAREYALLGNYSSAIVCYRGVLEQIKKYLFTVRDSSFQQKWQQVWQEINEENNQVQEIMRTLESFQLETTPSKPPSNQDGINDIWPVQVERRSSPLPVRRPPVPYKDSKPHNNRLSVAGVRAQHRQSPRGANGDRAKPLKGKEKKEAKPKDDKNKAEVSEKEVKRFDGQGYDKDLIEALERDIISQNPNVKWDDIADLEEAKKLLKEAVVLPMWMPEFFKGIRRPWKGVLMVGPPGTGKTLLAKAVATECRTTFFNVSSSTLTSKYRGESEKLVRILFEMARFYAPTTIFIDEIDSMCSRRGTSEEHEASRRVKAELLVQMDGVGGASDNEDPSKMVMVLAATNFPWDIDEALRRRLEKRIYIPLPSAKGRVELLRINLKELELANDVDMAKIAEQSEGYSGADITNVCRDASLMAMRRRIEGLTPEEIRNISRAEMHMPTTMEDFESSLKKVSKSVSASDLEKYEKWIEEFGSC</sequence>
<protein>
    <recommendedName>
        <fullName evidence="2">Katanin p60 ATPase-containing subunit A1</fullName>
        <shortName evidence="2">Katanin p60 subunit A1</shortName>
        <ecNumber evidence="2">5.6.1.1</ecNumber>
    </recommendedName>
    <alternativeName>
        <fullName evidence="2">p60 katanin</fullName>
    </alternativeName>
</protein>
<feature type="chain" id="PRO_0000367128" description="Katanin p60 ATPase-containing subunit A1">
    <location>
        <begin position="1"/>
        <end position="486"/>
    </location>
</feature>
<feature type="region of interest" description="Disordered" evidence="3">
    <location>
        <begin position="103"/>
        <end position="174"/>
    </location>
</feature>
<feature type="compositionally biased region" description="Basic and acidic residues" evidence="3">
    <location>
        <begin position="143"/>
        <end position="174"/>
    </location>
</feature>
<feature type="binding site" evidence="2">
    <location>
        <begin position="244"/>
        <end position="251"/>
    </location>
    <ligand>
        <name>ATP</name>
        <dbReference type="ChEBI" id="CHEBI:30616"/>
    </ligand>
</feature>
<evidence type="ECO:0000250" key="1">
    <source>
        <dbReference type="UniProtKB" id="O75449"/>
    </source>
</evidence>
<evidence type="ECO:0000255" key="2">
    <source>
        <dbReference type="HAMAP-Rule" id="MF_03023"/>
    </source>
</evidence>
<evidence type="ECO:0000256" key="3">
    <source>
        <dbReference type="SAM" id="MobiDB-lite"/>
    </source>
</evidence>
<dbReference type="EC" id="5.6.1.1" evidence="2"/>
<dbReference type="EMBL" id="BT045744">
    <property type="protein sequence ID" value="ACI34006.1"/>
    <property type="molecule type" value="mRNA"/>
</dbReference>
<dbReference type="RefSeq" id="NP_001133845.1">
    <property type="nucleotide sequence ID" value="NM_001140373.1"/>
</dbReference>
<dbReference type="RefSeq" id="XP_014060201.1">
    <property type="nucleotide sequence ID" value="XM_014204726.2"/>
</dbReference>
<dbReference type="SMR" id="B5X3X5"/>
<dbReference type="STRING" id="8030.ENSSSAP00000088260"/>
<dbReference type="PaxDb" id="8030-ENSSSAP00000088260"/>
<dbReference type="Ensembl" id="ENSSSAT00020007651">
    <property type="protein sequence ID" value="ENSSSAP00020006920"/>
    <property type="gene ID" value="ENSSSAG00020002875"/>
</dbReference>
<dbReference type="Ensembl" id="ENSSSAT00070072784">
    <property type="protein sequence ID" value="ENSSSAP00070069558"/>
    <property type="gene ID" value="ENSSSAG00070045271"/>
</dbReference>
<dbReference type="Ensembl" id="ENSSSAT00075019044">
    <property type="protein sequence ID" value="ENSSSAP00075012902"/>
    <property type="gene ID" value="ENSSSAG00075009385"/>
</dbReference>
<dbReference type="GeneID" id="100195344"/>
<dbReference type="KEGG" id="sasa:100195344"/>
<dbReference type="CTD" id="11104"/>
<dbReference type="OMA" id="PRDEMHM"/>
<dbReference type="OrthoDB" id="339502at7898"/>
<dbReference type="Proteomes" id="UP000087266">
    <property type="component" value="Chromosome ssa06"/>
</dbReference>
<dbReference type="Bgee" id="ENSSSAG00000070033">
    <property type="expression patterns" value="Expressed in ovary and 22 other cell types or tissues"/>
</dbReference>
<dbReference type="GO" id="GO:0005813">
    <property type="term" value="C:centrosome"/>
    <property type="evidence" value="ECO:0007669"/>
    <property type="project" value="UniProtKB-SubCell"/>
</dbReference>
<dbReference type="GO" id="GO:0005737">
    <property type="term" value="C:cytoplasm"/>
    <property type="evidence" value="ECO:0000250"/>
    <property type="project" value="UniProtKB"/>
</dbReference>
<dbReference type="GO" id="GO:0005874">
    <property type="term" value="C:microtubule"/>
    <property type="evidence" value="ECO:0007669"/>
    <property type="project" value="UniProtKB-KW"/>
</dbReference>
<dbReference type="GO" id="GO:0030496">
    <property type="term" value="C:midbody"/>
    <property type="evidence" value="ECO:0000250"/>
    <property type="project" value="UniProtKB"/>
</dbReference>
<dbReference type="GO" id="GO:0097431">
    <property type="term" value="C:mitotic spindle pole"/>
    <property type="evidence" value="ECO:0000250"/>
    <property type="project" value="UniProtKB"/>
</dbReference>
<dbReference type="GO" id="GO:0005819">
    <property type="term" value="C:spindle"/>
    <property type="evidence" value="ECO:0000250"/>
    <property type="project" value="UniProtKB"/>
</dbReference>
<dbReference type="GO" id="GO:0000922">
    <property type="term" value="C:spindle pole"/>
    <property type="evidence" value="ECO:0000250"/>
    <property type="project" value="UniProtKB"/>
</dbReference>
<dbReference type="GO" id="GO:0005524">
    <property type="term" value="F:ATP binding"/>
    <property type="evidence" value="ECO:0007669"/>
    <property type="project" value="UniProtKB-KW"/>
</dbReference>
<dbReference type="GO" id="GO:0016887">
    <property type="term" value="F:ATP hydrolysis activity"/>
    <property type="evidence" value="ECO:0007669"/>
    <property type="project" value="InterPro"/>
</dbReference>
<dbReference type="GO" id="GO:0008017">
    <property type="term" value="F:microtubule binding"/>
    <property type="evidence" value="ECO:0007669"/>
    <property type="project" value="UniProtKB-UniRule"/>
</dbReference>
<dbReference type="GO" id="GO:0008568">
    <property type="term" value="F:microtubule severing ATPase activity"/>
    <property type="evidence" value="ECO:0007669"/>
    <property type="project" value="UniProtKB-EC"/>
</dbReference>
<dbReference type="GO" id="GO:0051301">
    <property type="term" value="P:cell division"/>
    <property type="evidence" value="ECO:0007669"/>
    <property type="project" value="UniProtKB-KW"/>
</dbReference>
<dbReference type="GO" id="GO:0051013">
    <property type="term" value="P:microtubule severing"/>
    <property type="evidence" value="ECO:0007669"/>
    <property type="project" value="UniProtKB-UniRule"/>
</dbReference>
<dbReference type="CDD" id="cd21748">
    <property type="entry name" value="Kp60-NTD"/>
    <property type="match status" value="1"/>
</dbReference>
<dbReference type="CDD" id="cd19522">
    <property type="entry name" value="RecA-like_KTNA1"/>
    <property type="match status" value="1"/>
</dbReference>
<dbReference type="FunFam" id="1.10.8.60:FF:000025">
    <property type="entry name" value="Katanin p60 ATPase-containing subunit A1"/>
    <property type="match status" value="1"/>
</dbReference>
<dbReference type="FunFam" id="1.20.58.80:FF:000003">
    <property type="entry name" value="Katanin p60 ATPase-containing subunit A1"/>
    <property type="match status" value="1"/>
</dbReference>
<dbReference type="FunFam" id="3.40.50.300:FF:000159">
    <property type="entry name" value="Katanin p60 ATPase-containing subunit A1"/>
    <property type="match status" value="1"/>
</dbReference>
<dbReference type="Gene3D" id="1.10.8.60">
    <property type="match status" value="1"/>
</dbReference>
<dbReference type="Gene3D" id="3.40.50.300">
    <property type="entry name" value="P-loop containing nucleotide triphosphate hydrolases"/>
    <property type="match status" value="1"/>
</dbReference>
<dbReference type="Gene3D" id="1.20.58.80">
    <property type="entry name" value="Phosphotransferase system, lactose/cellobiose-type IIA subunit"/>
    <property type="match status" value="1"/>
</dbReference>
<dbReference type="HAMAP" id="MF_03023">
    <property type="entry name" value="Katanin_p60_A1"/>
    <property type="match status" value="1"/>
</dbReference>
<dbReference type="InterPro" id="IPR003593">
    <property type="entry name" value="AAA+_ATPase"/>
</dbReference>
<dbReference type="InterPro" id="IPR041569">
    <property type="entry name" value="AAA_lid_3"/>
</dbReference>
<dbReference type="InterPro" id="IPR003959">
    <property type="entry name" value="ATPase_AAA_core"/>
</dbReference>
<dbReference type="InterPro" id="IPR003960">
    <property type="entry name" value="ATPase_AAA_CS"/>
</dbReference>
<dbReference type="InterPro" id="IPR028596">
    <property type="entry name" value="KATNA1"/>
</dbReference>
<dbReference type="InterPro" id="IPR048611">
    <property type="entry name" value="KATNA1_MIT"/>
</dbReference>
<dbReference type="InterPro" id="IPR048612">
    <property type="entry name" value="KTNA1_AAA_dom"/>
</dbReference>
<dbReference type="InterPro" id="IPR050304">
    <property type="entry name" value="MT-severing_AAA_ATPase"/>
</dbReference>
<dbReference type="InterPro" id="IPR027417">
    <property type="entry name" value="P-loop_NTPase"/>
</dbReference>
<dbReference type="InterPro" id="IPR015415">
    <property type="entry name" value="Spast_Vps4_C"/>
</dbReference>
<dbReference type="PANTHER" id="PTHR23074">
    <property type="entry name" value="AAA DOMAIN-CONTAINING"/>
    <property type="match status" value="1"/>
</dbReference>
<dbReference type="PANTHER" id="PTHR23074:SF71">
    <property type="entry name" value="KATANIN P60 ATPASE-CONTAINING SUBUNIT A1"/>
    <property type="match status" value="1"/>
</dbReference>
<dbReference type="Pfam" id="PF00004">
    <property type="entry name" value="AAA"/>
    <property type="match status" value="1"/>
</dbReference>
<dbReference type="Pfam" id="PF17862">
    <property type="entry name" value="AAA_lid_3"/>
    <property type="match status" value="1"/>
</dbReference>
<dbReference type="Pfam" id="PF21126">
    <property type="entry name" value="KATNA1_MIT"/>
    <property type="match status" value="1"/>
</dbReference>
<dbReference type="Pfam" id="PF09336">
    <property type="entry name" value="Vps4_C"/>
    <property type="match status" value="1"/>
</dbReference>
<dbReference type="SMART" id="SM00382">
    <property type="entry name" value="AAA"/>
    <property type="match status" value="1"/>
</dbReference>
<dbReference type="SUPFAM" id="SSF52540">
    <property type="entry name" value="P-loop containing nucleoside triphosphate hydrolases"/>
    <property type="match status" value="1"/>
</dbReference>
<dbReference type="PROSITE" id="PS00674">
    <property type="entry name" value="AAA"/>
    <property type="match status" value="1"/>
</dbReference>